<gene>
    <name evidence="1" type="primary">rpsU</name>
    <name type="ordered locus">CFPG_411</name>
</gene>
<reference key="1">
    <citation type="journal article" date="2008" name="Science">
        <title>Genome of an endosymbiont coupling N2 fixation to cellulolysis within RT protist cells in termite gut.</title>
        <authorList>
            <person name="Hongoh Y."/>
            <person name="Sharma V.K."/>
            <person name="Prakash T."/>
            <person name="Noda S."/>
            <person name="Toh H."/>
            <person name="Taylor T.D."/>
            <person name="Kudo T."/>
            <person name="Sakaki Y."/>
            <person name="Toyoda A."/>
            <person name="Hattori M."/>
            <person name="Ohkuma M."/>
        </authorList>
    </citation>
    <scope>NUCLEOTIDE SEQUENCE [LARGE SCALE GENOMIC DNA]</scope>
</reference>
<dbReference type="EMBL" id="AP010656">
    <property type="protein sequence ID" value="BAG83674.1"/>
    <property type="molecule type" value="Genomic_DNA"/>
</dbReference>
<dbReference type="RefSeq" id="WP_012573435.1">
    <property type="nucleotide sequence ID" value="NC_011565.1"/>
</dbReference>
<dbReference type="SMR" id="B6YR52"/>
<dbReference type="STRING" id="511995.CFPG_411"/>
<dbReference type="KEGG" id="aps:CFPG_411"/>
<dbReference type="eggNOG" id="COG0828">
    <property type="taxonomic scope" value="Bacteria"/>
</dbReference>
<dbReference type="HOGENOM" id="CLU_159258_2_0_10"/>
<dbReference type="OrthoDB" id="598353at2"/>
<dbReference type="Proteomes" id="UP000000723">
    <property type="component" value="Chromosome"/>
</dbReference>
<dbReference type="GO" id="GO:1990904">
    <property type="term" value="C:ribonucleoprotein complex"/>
    <property type="evidence" value="ECO:0007669"/>
    <property type="project" value="UniProtKB-KW"/>
</dbReference>
<dbReference type="GO" id="GO:0005840">
    <property type="term" value="C:ribosome"/>
    <property type="evidence" value="ECO:0007669"/>
    <property type="project" value="UniProtKB-KW"/>
</dbReference>
<dbReference type="GO" id="GO:0003735">
    <property type="term" value="F:structural constituent of ribosome"/>
    <property type="evidence" value="ECO:0007669"/>
    <property type="project" value="InterPro"/>
</dbReference>
<dbReference type="GO" id="GO:0006412">
    <property type="term" value="P:translation"/>
    <property type="evidence" value="ECO:0007669"/>
    <property type="project" value="UniProtKB-UniRule"/>
</dbReference>
<dbReference type="Gene3D" id="1.20.5.1150">
    <property type="entry name" value="Ribosomal protein S8"/>
    <property type="match status" value="1"/>
</dbReference>
<dbReference type="HAMAP" id="MF_00358">
    <property type="entry name" value="Ribosomal_bS21"/>
    <property type="match status" value="1"/>
</dbReference>
<dbReference type="InterPro" id="IPR001911">
    <property type="entry name" value="Ribosomal_bS21"/>
</dbReference>
<dbReference type="InterPro" id="IPR038380">
    <property type="entry name" value="Ribosomal_bS21_sf"/>
</dbReference>
<dbReference type="NCBIfam" id="TIGR00030">
    <property type="entry name" value="S21p"/>
    <property type="match status" value="1"/>
</dbReference>
<dbReference type="Pfam" id="PF01165">
    <property type="entry name" value="Ribosomal_S21"/>
    <property type="match status" value="1"/>
</dbReference>
<dbReference type="PRINTS" id="PR00976">
    <property type="entry name" value="RIBOSOMALS21"/>
</dbReference>
<proteinExistence type="inferred from homology"/>
<comment type="similarity">
    <text evidence="1">Belongs to the bacterial ribosomal protein bS21 family.</text>
</comment>
<protein>
    <recommendedName>
        <fullName evidence="1">Small ribosomal subunit protein bS21</fullName>
    </recommendedName>
    <alternativeName>
        <fullName evidence="2">30S ribosomal protein S21</fullName>
    </alternativeName>
</protein>
<feature type="chain" id="PRO_1000120583" description="Small ribosomal subunit protein bS21">
    <location>
        <begin position="1"/>
        <end position="63"/>
    </location>
</feature>
<evidence type="ECO:0000255" key="1">
    <source>
        <dbReference type="HAMAP-Rule" id="MF_00358"/>
    </source>
</evidence>
<evidence type="ECO:0000305" key="2"/>
<name>RS21_AZOPC</name>
<sequence length="63" mass="7417">MIIVSLKEGENLEKALKKFKRKFERTGVSKELKRRQAFVKPSVLRRNQKIHAIYAQKFLQSGD</sequence>
<keyword id="KW-1185">Reference proteome</keyword>
<keyword id="KW-0687">Ribonucleoprotein</keyword>
<keyword id="KW-0689">Ribosomal protein</keyword>
<organism>
    <name type="scientific">Azobacteroides pseudotrichonymphae genomovar. CFP2</name>
    <dbReference type="NCBI Taxonomy" id="511995"/>
    <lineage>
        <taxon>Bacteria</taxon>
        <taxon>Pseudomonadati</taxon>
        <taxon>Bacteroidota</taxon>
        <taxon>Bacteroidia</taxon>
        <taxon>Bacteroidales</taxon>
        <taxon>Candidatus Azobacteroides</taxon>
    </lineage>
</organism>
<accession>B6YR52</accession>